<name>PDXS_DESDA</name>
<proteinExistence type="inferred from homology"/>
<comment type="function">
    <text evidence="1">Catalyzes the formation of pyridoxal 5'-phosphate from ribose 5-phosphate (RBP), glyceraldehyde 3-phosphate (G3P) and ammonia. The ammonia is provided by the PdxT subunit. Can also use ribulose 5-phosphate and dihydroxyacetone phosphate as substrates, resulting from enzyme-catalyzed isomerization of RBP and G3P, respectively.</text>
</comment>
<comment type="catalytic activity">
    <reaction evidence="1">
        <text>aldehydo-D-ribose 5-phosphate + D-glyceraldehyde 3-phosphate + L-glutamine = pyridoxal 5'-phosphate + L-glutamate + phosphate + 3 H2O + H(+)</text>
        <dbReference type="Rhea" id="RHEA:31507"/>
        <dbReference type="ChEBI" id="CHEBI:15377"/>
        <dbReference type="ChEBI" id="CHEBI:15378"/>
        <dbReference type="ChEBI" id="CHEBI:29985"/>
        <dbReference type="ChEBI" id="CHEBI:43474"/>
        <dbReference type="ChEBI" id="CHEBI:58273"/>
        <dbReference type="ChEBI" id="CHEBI:58359"/>
        <dbReference type="ChEBI" id="CHEBI:59776"/>
        <dbReference type="ChEBI" id="CHEBI:597326"/>
        <dbReference type="EC" id="4.3.3.6"/>
    </reaction>
</comment>
<comment type="pathway">
    <text evidence="1">Cofactor biosynthesis; pyridoxal 5'-phosphate biosynthesis.</text>
</comment>
<comment type="subunit">
    <text evidence="1">In the presence of PdxT, forms a dodecamer of heterodimers.</text>
</comment>
<comment type="similarity">
    <text evidence="1">Belongs to the PdxS/SNZ family.</text>
</comment>
<evidence type="ECO:0000255" key="1">
    <source>
        <dbReference type="HAMAP-Rule" id="MF_01824"/>
    </source>
</evidence>
<dbReference type="EC" id="4.3.3.6" evidence="1"/>
<dbReference type="EMBL" id="CP001358">
    <property type="protein sequence ID" value="ACL49794.1"/>
    <property type="molecule type" value="Genomic_DNA"/>
</dbReference>
<dbReference type="SMR" id="B8J2D5"/>
<dbReference type="STRING" id="525146.Ddes_1898"/>
<dbReference type="KEGG" id="dds:Ddes_1898"/>
<dbReference type="eggNOG" id="COG0214">
    <property type="taxonomic scope" value="Bacteria"/>
</dbReference>
<dbReference type="HOGENOM" id="CLU_055352_1_0_7"/>
<dbReference type="UniPathway" id="UPA00245"/>
<dbReference type="GO" id="GO:0036381">
    <property type="term" value="F:pyridoxal 5'-phosphate synthase (glutamine hydrolysing) activity"/>
    <property type="evidence" value="ECO:0007669"/>
    <property type="project" value="UniProtKB-UniRule"/>
</dbReference>
<dbReference type="GO" id="GO:0006520">
    <property type="term" value="P:amino acid metabolic process"/>
    <property type="evidence" value="ECO:0007669"/>
    <property type="project" value="TreeGrafter"/>
</dbReference>
<dbReference type="GO" id="GO:0042823">
    <property type="term" value="P:pyridoxal phosphate biosynthetic process"/>
    <property type="evidence" value="ECO:0007669"/>
    <property type="project" value="UniProtKB-UniRule"/>
</dbReference>
<dbReference type="GO" id="GO:0008615">
    <property type="term" value="P:pyridoxine biosynthetic process"/>
    <property type="evidence" value="ECO:0007669"/>
    <property type="project" value="TreeGrafter"/>
</dbReference>
<dbReference type="CDD" id="cd04727">
    <property type="entry name" value="pdxS"/>
    <property type="match status" value="1"/>
</dbReference>
<dbReference type="FunFam" id="3.20.20.70:FF:000001">
    <property type="entry name" value="Pyridoxine biosynthesis protein PDX1"/>
    <property type="match status" value="1"/>
</dbReference>
<dbReference type="Gene3D" id="3.20.20.70">
    <property type="entry name" value="Aldolase class I"/>
    <property type="match status" value="1"/>
</dbReference>
<dbReference type="HAMAP" id="MF_01824">
    <property type="entry name" value="PdxS"/>
    <property type="match status" value="1"/>
</dbReference>
<dbReference type="InterPro" id="IPR013785">
    <property type="entry name" value="Aldolase_TIM"/>
</dbReference>
<dbReference type="InterPro" id="IPR001852">
    <property type="entry name" value="PdxS/SNZ"/>
</dbReference>
<dbReference type="InterPro" id="IPR033755">
    <property type="entry name" value="PdxS/SNZ_N"/>
</dbReference>
<dbReference type="InterPro" id="IPR011060">
    <property type="entry name" value="RibuloseP-bd_barrel"/>
</dbReference>
<dbReference type="NCBIfam" id="NF003215">
    <property type="entry name" value="PRK04180.1"/>
    <property type="match status" value="1"/>
</dbReference>
<dbReference type="NCBIfam" id="TIGR00343">
    <property type="entry name" value="pyridoxal 5'-phosphate synthase lyase subunit PdxS"/>
    <property type="match status" value="1"/>
</dbReference>
<dbReference type="PANTHER" id="PTHR31829">
    <property type="entry name" value="PYRIDOXAL 5'-PHOSPHATE SYNTHASE SUBUNIT SNZ1-RELATED"/>
    <property type="match status" value="1"/>
</dbReference>
<dbReference type="PANTHER" id="PTHR31829:SF0">
    <property type="entry name" value="PYRIDOXAL 5'-PHOSPHATE SYNTHASE SUBUNIT SNZ1-RELATED"/>
    <property type="match status" value="1"/>
</dbReference>
<dbReference type="Pfam" id="PF01680">
    <property type="entry name" value="SOR_SNZ"/>
    <property type="match status" value="1"/>
</dbReference>
<dbReference type="PIRSF" id="PIRSF029271">
    <property type="entry name" value="Pdx1"/>
    <property type="match status" value="1"/>
</dbReference>
<dbReference type="SUPFAM" id="SSF51366">
    <property type="entry name" value="Ribulose-phoshate binding barrel"/>
    <property type="match status" value="1"/>
</dbReference>
<dbReference type="PROSITE" id="PS01235">
    <property type="entry name" value="PDXS_SNZ_1"/>
    <property type="match status" value="1"/>
</dbReference>
<dbReference type="PROSITE" id="PS51129">
    <property type="entry name" value="PDXS_SNZ_2"/>
    <property type="match status" value="1"/>
</dbReference>
<organism>
    <name type="scientific">Desulfovibrio desulfuricans (strain ATCC 27774 / DSM 6949 / MB)</name>
    <dbReference type="NCBI Taxonomy" id="525146"/>
    <lineage>
        <taxon>Bacteria</taxon>
        <taxon>Pseudomonadati</taxon>
        <taxon>Thermodesulfobacteriota</taxon>
        <taxon>Desulfovibrionia</taxon>
        <taxon>Desulfovibrionales</taxon>
        <taxon>Desulfovibrionaceae</taxon>
        <taxon>Desulfovibrio</taxon>
    </lineage>
</organism>
<sequence length="293" mass="31510">MEQGTIRLKTGLAEMLKGGVIMDVTTPEQAKIAEEAGACAVMALERVPADIRAAGGVARMADPTIVKKIMEVATIPVMAKARIGHFVEARILESMGVDYIDESEVLTPADDKYHIDKRDFTVPFVCGCRNLGEALRRIAEGAAMIRTKGEPGTGNVVEAVRHCRQVMDEVRMLCALPEAEVPNFAKEMGAPLELCLLVRKEGRLPVVNFAAGGIATPADAAMMMHLGCDGVFVGSGIFKSGDPAKRARAIVQAVTNYKDFALLAEISRDLGEPMVGIEISTIPSGERMQERGW</sequence>
<keyword id="KW-0456">Lyase</keyword>
<keyword id="KW-0663">Pyridoxal phosphate</keyword>
<keyword id="KW-0704">Schiff base</keyword>
<feature type="chain" id="PRO_1000188221" description="Pyridoxal 5'-phosphate synthase subunit PdxS">
    <location>
        <begin position="1"/>
        <end position="293"/>
    </location>
</feature>
<feature type="active site" description="Schiff-base intermediate with D-ribose 5-phosphate" evidence="1">
    <location>
        <position position="80"/>
    </location>
</feature>
<feature type="binding site" evidence="1">
    <location>
        <position position="23"/>
    </location>
    <ligand>
        <name>D-ribose 5-phosphate</name>
        <dbReference type="ChEBI" id="CHEBI:78346"/>
    </ligand>
</feature>
<feature type="binding site" evidence="1">
    <location>
        <position position="152"/>
    </location>
    <ligand>
        <name>D-ribose 5-phosphate</name>
        <dbReference type="ChEBI" id="CHEBI:78346"/>
    </ligand>
</feature>
<feature type="binding site" evidence="1">
    <location>
        <position position="164"/>
    </location>
    <ligand>
        <name>D-glyceraldehyde 3-phosphate</name>
        <dbReference type="ChEBI" id="CHEBI:59776"/>
    </ligand>
</feature>
<feature type="binding site" evidence="1">
    <location>
        <position position="213"/>
    </location>
    <ligand>
        <name>D-ribose 5-phosphate</name>
        <dbReference type="ChEBI" id="CHEBI:78346"/>
    </ligand>
</feature>
<feature type="binding site" evidence="1">
    <location>
        <begin position="234"/>
        <end position="235"/>
    </location>
    <ligand>
        <name>D-ribose 5-phosphate</name>
        <dbReference type="ChEBI" id="CHEBI:78346"/>
    </ligand>
</feature>
<reference key="1">
    <citation type="submission" date="2009-01" db="EMBL/GenBank/DDBJ databases">
        <title>Complete sequence of Desulfovibrio desulfuricans subsp. desulfuricans str. ATCC 27774.</title>
        <authorList>
            <consortium name="US DOE Joint Genome Institute"/>
            <person name="Lucas S."/>
            <person name="Copeland A."/>
            <person name="Lapidus A."/>
            <person name="Glavina del Rio T."/>
            <person name="Tice H."/>
            <person name="Bruce D."/>
            <person name="Goodwin L."/>
            <person name="Pitluck S."/>
            <person name="Sims D."/>
            <person name="Lu M."/>
            <person name="Kiss H."/>
            <person name="Meineke L."/>
            <person name="Brettin T."/>
            <person name="Detter J.C."/>
            <person name="Han C."/>
            <person name="Larimer F."/>
            <person name="Land M."/>
            <person name="Hauser L."/>
            <person name="Kyrpides N."/>
            <person name="Ovchinnikova G."/>
            <person name="Hazen T.C."/>
        </authorList>
    </citation>
    <scope>NUCLEOTIDE SEQUENCE [LARGE SCALE GENOMIC DNA]</scope>
    <source>
        <strain>ATCC 27774 / DSM 6949 / MB</strain>
    </source>
</reference>
<gene>
    <name evidence="1" type="primary">pdxS</name>
    <name type="ordered locus">Ddes_1898</name>
</gene>
<protein>
    <recommendedName>
        <fullName evidence="1">Pyridoxal 5'-phosphate synthase subunit PdxS</fullName>
        <shortName evidence="1">PLP synthase subunit PdxS</shortName>
        <ecNumber evidence="1">4.3.3.6</ecNumber>
    </recommendedName>
    <alternativeName>
        <fullName evidence="1">Pdx1</fullName>
    </alternativeName>
</protein>
<accession>B8J2D5</accession>